<reference key="1">
    <citation type="journal article" date="2010" name="J. Biol. Chem.">
        <title>Structure and mechanism of sanguinarine reductase, an enzyme of alkaloid detoxification.</title>
        <authorList>
            <person name="Vogel M."/>
            <person name="Lawson M."/>
            <person name="Sippl W."/>
            <person name="Conrad U."/>
            <person name="Roos W."/>
        </authorList>
    </citation>
    <scope>NUCLEOTIDE SEQUENCE [GENOMIC DNA]</scope>
    <scope>PROTEIN SEQUENCE OF 34-46; 49-92; 147-242 AND 264-273</scope>
    <scope>3D-STRUCTURE MODELING</scope>
    <scope>FUNCTION</scope>
    <scope>CATALYTIC ACTIVITY</scope>
    <scope>ACTIVITY REGULATION</scope>
    <scope>SUBUNIT</scope>
    <scope>MUTAGENESIS OF 102-SER--MET-114; SER-153; CYS-157; ASP-158; HIS-161; PHE-162 AND MET-166</scope>
</reference>
<reference key="2">
    <citation type="journal article" date="2006" name="Plant Cell Environ.">
        <title>Sanguinarine reductase, a key enzyme of benzophenanthridine detoxification.</title>
        <authorList>
            <person name="Weiss D."/>
            <person name="Baumert A."/>
            <person name="Vogel M."/>
            <person name="Roos W."/>
        </authorList>
    </citation>
    <scope>FUNCTION</scope>
    <scope>CATALYTIC ACTIVITY</scope>
    <scope>BIOPHYSICOCHEMICAL PROPERTIES</scope>
    <scope>SUBSTRATE SPECIFICITY</scope>
</reference>
<accession>D5JWB3</accession>
<protein>
    <recommendedName>
        <fullName evidence="3">Sanguinarine reductase</fullName>
        <ecNumber evidence="4">1.3.1.107</ecNumber>
    </recommendedName>
</protein>
<proteinExistence type="evidence at protein level"/>
<evidence type="ECO:0000269" key="1">
    <source>
    </source>
</evidence>
<evidence type="ECO:0000269" key="2">
    <source>
    </source>
</evidence>
<evidence type="ECO:0000303" key="3">
    <source>
    </source>
</evidence>
<evidence type="ECO:0000305" key="4"/>
<evidence type="ECO:0000305" key="5">
    <source>
    </source>
</evidence>
<evidence type="ECO:0000312" key="6">
    <source>
        <dbReference type="EMBL" id="ADE41047.1"/>
    </source>
</evidence>
<feature type="chain" id="PRO_0000432076" description="Sanguinarine reductase">
    <location>
        <begin position="1"/>
        <end position="273"/>
    </location>
</feature>
<feature type="active site" description="Proton donor" evidence="5">
    <location>
        <position position="153"/>
    </location>
</feature>
<feature type="binding site" evidence="5">
    <location>
        <begin position="157"/>
        <end position="161"/>
    </location>
    <ligand>
        <name>substrate</name>
    </ligand>
</feature>
<feature type="binding site" evidence="5">
    <location>
        <position position="175"/>
    </location>
    <ligand>
        <name>substrate</name>
    </ligand>
</feature>
<feature type="mutagenesis site" description="Loss of catalytic activity." evidence="2">
    <location>
        <begin position="102"/>
        <end position="114"/>
    </location>
</feature>
<feature type="mutagenesis site" description="Loss of catalytic activity." evidence="2">
    <original>S</original>
    <variation>A</variation>
    <location>
        <position position="153"/>
    </location>
</feature>
<feature type="mutagenesis site" description="Strongly decreased catalytic activity." evidence="2">
    <original>C</original>
    <variation>A</variation>
    <location>
        <position position="157"/>
    </location>
</feature>
<feature type="mutagenesis site" description="Slightly decreased catalytic activity." evidence="2">
    <original>D</original>
    <variation>N</variation>
    <location>
        <position position="158"/>
    </location>
</feature>
<feature type="mutagenesis site" description="Strongly decreased catalytic activity." evidence="2">
    <original>H</original>
    <variation>A</variation>
    <location>
        <position position="161"/>
    </location>
</feature>
<feature type="mutagenesis site" description="Slightly decreased catalytic activity." evidence="2">
    <original>F</original>
    <variation>P</variation>
    <location>
        <position position="162"/>
    </location>
</feature>
<feature type="mutagenesis site" description="No effect on catalytic activity." evidence="2">
    <original>M</original>
    <variation>L</variation>
    <location>
        <position position="166"/>
    </location>
</feature>
<sequence length="273" mass="29520">MADSSKKLTVLLSGASGLTGSLAFKKLKERSDKFEVRGLVRSEASKQKLGGGDEIFIGDISDPKTLEPAMEGIDALIILTSAIPRMKPTEEFTAEMISGGRSEDVIDASFSGPMPEFYYDEGQYPEQVDWIGQKNQIDTAKKMGVKHIVLVGSMGGCDPDHFLNHMGNGNILIWKRKAEQYLADSGVPYTIIRAGGLDNKAGGVRELLVAKDDVLLPTENGFIARADVAEACVQALEIEEVKNKAFDLGSKPEGVGEATKDFKALFSQVTTPF</sequence>
<organism evidence="6">
    <name type="scientific">Eschscholzia californica</name>
    <name type="common">California poppy</name>
    <dbReference type="NCBI Taxonomy" id="3467"/>
    <lineage>
        <taxon>Eukaryota</taxon>
        <taxon>Viridiplantae</taxon>
        <taxon>Streptophyta</taxon>
        <taxon>Embryophyta</taxon>
        <taxon>Tracheophyta</taxon>
        <taxon>Spermatophyta</taxon>
        <taxon>Magnoliopsida</taxon>
        <taxon>Ranunculales</taxon>
        <taxon>Papaveraceae</taxon>
        <taxon>Papaveroideae</taxon>
        <taxon>Eschscholzia</taxon>
    </lineage>
</organism>
<gene>
    <name evidence="3" type="primary">SARED1</name>
</gene>
<dbReference type="EC" id="1.3.1.107" evidence="4"/>
<dbReference type="EMBL" id="GU338458">
    <property type="protein sequence ID" value="ADE41047.1"/>
    <property type="molecule type" value="Genomic_DNA"/>
</dbReference>
<dbReference type="SMR" id="D5JWB3"/>
<dbReference type="KEGG" id="ag:ADE41047"/>
<dbReference type="BioCyc" id="MetaCyc:MONOMER-13854"/>
<dbReference type="BRENDA" id="1.3.1.107">
    <property type="organism ID" value="2173"/>
</dbReference>
<dbReference type="GO" id="GO:0009507">
    <property type="term" value="C:chloroplast"/>
    <property type="evidence" value="ECO:0007669"/>
    <property type="project" value="TreeGrafter"/>
</dbReference>
<dbReference type="GO" id="GO:0016491">
    <property type="term" value="F:oxidoreductase activity"/>
    <property type="evidence" value="ECO:0007669"/>
    <property type="project" value="UniProtKB-KW"/>
</dbReference>
<dbReference type="GO" id="GO:0009636">
    <property type="term" value="P:response to toxic substance"/>
    <property type="evidence" value="ECO:0007669"/>
    <property type="project" value="UniProtKB-KW"/>
</dbReference>
<dbReference type="CDD" id="cd05243">
    <property type="entry name" value="SDR_a5"/>
    <property type="match status" value="1"/>
</dbReference>
<dbReference type="FunFam" id="3.40.50.720:FF:000253">
    <property type="entry name" value="Uncharacterized protein At5g02240"/>
    <property type="match status" value="1"/>
</dbReference>
<dbReference type="Gene3D" id="3.40.50.720">
    <property type="entry name" value="NAD(P)-binding Rossmann-like Domain"/>
    <property type="match status" value="1"/>
</dbReference>
<dbReference type="InterPro" id="IPR016040">
    <property type="entry name" value="NAD(P)-bd_dom"/>
</dbReference>
<dbReference type="InterPro" id="IPR036291">
    <property type="entry name" value="NAD(P)-bd_dom_sf"/>
</dbReference>
<dbReference type="InterPro" id="IPR044163">
    <property type="entry name" value="SARED1-like"/>
</dbReference>
<dbReference type="PANTHER" id="PTHR14194">
    <property type="entry name" value="NITROGEN METABOLIC REGULATION PROTEIN NMR-RELATED"/>
    <property type="match status" value="1"/>
</dbReference>
<dbReference type="PANTHER" id="PTHR14194:SF86">
    <property type="entry name" value="OS05G0110300 PROTEIN"/>
    <property type="match status" value="1"/>
</dbReference>
<dbReference type="Pfam" id="PF13460">
    <property type="entry name" value="NAD_binding_10"/>
    <property type="match status" value="1"/>
</dbReference>
<dbReference type="SUPFAM" id="SSF51735">
    <property type="entry name" value="NAD(P)-binding Rossmann-fold domains"/>
    <property type="match status" value="1"/>
</dbReference>
<keyword id="KW-0216">Detoxification</keyword>
<keyword id="KW-0903">Direct protein sequencing</keyword>
<keyword id="KW-0520">NAD</keyword>
<keyword id="KW-0521">NADP</keyword>
<keyword id="KW-0560">Oxidoreductase</keyword>
<name>SARED_ESCCA</name>
<comment type="function">
    <text evidence="1 2">Catalyzes the reduction of benzophenanthridines, preferentially sanguinarine, to the corresponding dihydroalkaloids. Involved in detoxifying the phytoalexins produced by plant itself. The sanguinarine produced by intact cells upon elicitation, after excretion and binding to cell wall elements, is rapidly reabsorbed and reduced to the less toxic dihydrosanguinarine. Can work with both NAD(P) or NAD as a hydrogen donor, but at low concentrations, the reaction velocity with NAD(P)H is threefold higher than with NADH. However, chelerythrine shows maximum conversion rates with NADH. The substrate preference is sanguinarine &gt; chelerythrine &gt; chelirubine, macarpine or 10-OH-chelerythrine. No activity with berberine or phenanthridine cations.</text>
</comment>
<comment type="catalytic activity">
    <reaction evidence="1 2">
        <text>dihydrosanguinarine + NADP(+) = sanguinarine + NADPH</text>
        <dbReference type="Rhea" id="RHEA:41656"/>
        <dbReference type="ChEBI" id="CHEBI:17183"/>
        <dbReference type="ChEBI" id="CHEBI:17209"/>
        <dbReference type="ChEBI" id="CHEBI:57783"/>
        <dbReference type="ChEBI" id="CHEBI:58349"/>
        <dbReference type="EC" id="1.3.1.107"/>
    </reaction>
</comment>
<comment type="catalytic activity">
    <reaction evidence="1 2">
        <text>dihydrosanguinarine + NAD(+) = sanguinarine + NADH</text>
        <dbReference type="Rhea" id="RHEA:41660"/>
        <dbReference type="ChEBI" id="CHEBI:17183"/>
        <dbReference type="ChEBI" id="CHEBI:17209"/>
        <dbReference type="ChEBI" id="CHEBI:57540"/>
        <dbReference type="ChEBI" id="CHEBI:57945"/>
        <dbReference type="EC" id="1.3.1.107"/>
    </reaction>
</comment>
<comment type="catalytic activity">
    <reaction evidence="1 2">
        <text>dihydrochelirubine + NAD(+) = chelirubine + NADH</text>
        <dbReference type="Rhea" id="RHEA:41664"/>
        <dbReference type="ChEBI" id="CHEBI:17031"/>
        <dbReference type="ChEBI" id="CHEBI:17789"/>
        <dbReference type="ChEBI" id="CHEBI:57540"/>
        <dbReference type="ChEBI" id="CHEBI:57945"/>
        <dbReference type="EC" id="1.3.1.107"/>
    </reaction>
</comment>
<comment type="catalytic activity">
    <reaction evidence="1 2">
        <text>dihydrochelirubine + NADP(+) = chelirubine + NADPH</text>
        <dbReference type="Rhea" id="RHEA:41668"/>
        <dbReference type="ChEBI" id="CHEBI:17031"/>
        <dbReference type="ChEBI" id="CHEBI:17789"/>
        <dbReference type="ChEBI" id="CHEBI:57783"/>
        <dbReference type="ChEBI" id="CHEBI:58349"/>
        <dbReference type="EC" id="1.3.1.107"/>
    </reaction>
</comment>
<comment type="activity regulation">
    <text evidence="2">Inhibited by iodoacetamide and irreversibly by its product, dihydrosanguinarine.</text>
</comment>
<comment type="biophysicochemical properties">
    <kinetics>
        <KM evidence="1">9.5 uM for sanguinarine (in the presence of 40 uM NADH)</KM>
    </kinetics>
    <phDependence>
        <text evidence="1">Optimum pH is 6.5-7.5.</text>
    </phDependence>
</comment>
<comment type="subunit">
    <text evidence="2">Monomer.</text>
</comment>
<comment type="similarity">
    <text evidence="4">Belongs to the NAD(P)-dependent epimerase/dehydratase family.</text>
</comment>